<proteinExistence type="evidence at protein level"/>
<feature type="chain" id="PRO_0000291777" description="Cyclic nucleotide-binding domain-containing protein 1">
    <location>
        <begin position="1"/>
        <end position="436"/>
    </location>
</feature>
<feature type="region of interest" description="Disordered" evidence="1">
    <location>
        <begin position="89"/>
        <end position="108"/>
    </location>
</feature>
<feature type="compositionally biased region" description="Basic and acidic residues" evidence="1">
    <location>
        <begin position="89"/>
        <end position="105"/>
    </location>
</feature>
<feature type="binding site">
    <location>
        <begin position="322"/>
        <end position="436"/>
    </location>
    <ligand>
        <name>a nucleoside 3',5'-cyclic phosphate</name>
        <dbReference type="ChEBI" id="CHEBI:58464"/>
    </ligand>
</feature>
<feature type="sequence variant" id="VAR_032859" description="In dbSNP:rs10504829.">
    <original>D</original>
    <variation>N</variation>
    <location>
        <position position="64"/>
    </location>
</feature>
<feature type="sequence variant" id="VAR_032860" description="In dbSNP:rs16894901.">
    <original>Q</original>
    <variation>K</variation>
    <location>
        <position position="69"/>
    </location>
</feature>
<feature type="sequence variant" id="VAR_061108" description="In dbSNP:rs60556175.">
    <original>M</original>
    <variation>V</variation>
    <location>
        <position position="257"/>
    </location>
</feature>
<gene>
    <name type="primary">CNBD1</name>
</gene>
<dbReference type="EMBL" id="AK093121">
    <property type="protein sequence ID" value="BAC04062.1"/>
    <property type="molecule type" value="mRNA"/>
</dbReference>
<dbReference type="EMBL" id="BC117326">
    <property type="protein sequence ID" value="AAI17327.1"/>
    <property type="molecule type" value="mRNA"/>
</dbReference>
<dbReference type="EMBL" id="BC117328">
    <property type="protein sequence ID" value="AAI17329.1"/>
    <property type="molecule type" value="mRNA"/>
</dbReference>
<dbReference type="CCDS" id="CCDS55259.1"/>
<dbReference type="RefSeq" id="NP_775809.1">
    <property type="nucleotide sequence ID" value="NM_173538.3"/>
</dbReference>
<dbReference type="SMR" id="Q8NA66"/>
<dbReference type="BioGRID" id="127974">
    <property type="interactions" value="1"/>
</dbReference>
<dbReference type="FunCoup" id="Q8NA66">
    <property type="interactions" value="38"/>
</dbReference>
<dbReference type="IntAct" id="Q8NA66">
    <property type="interactions" value="1"/>
</dbReference>
<dbReference type="STRING" id="9606.ENSP00000430073"/>
<dbReference type="CarbonylDB" id="Q8NA66"/>
<dbReference type="iPTMnet" id="Q8NA66"/>
<dbReference type="PhosphoSitePlus" id="Q8NA66"/>
<dbReference type="BioMuta" id="CNBD1"/>
<dbReference type="DMDM" id="74729846"/>
<dbReference type="jPOST" id="Q8NA66"/>
<dbReference type="MassIVE" id="Q8NA66"/>
<dbReference type="PaxDb" id="9606-ENSP00000430073"/>
<dbReference type="PeptideAtlas" id="Q8NA66"/>
<dbReference type="ProteomicsDB" id="72647"/>
<dbReference type="Antibodypedia" id="25531">
    <property type="antibodies" value="23 antibodies from 7 providers"/>
</dbReference>
<dbReference type="DNASU" id="168975"/>
<dbReference type="Ensembl" id="ENST00000518476.6">
    <property type="protein sequence ID" value="ENSP00000430073.1"/>
    <property type="gene ID" value="ENSG00000176571.13"/>
</dbReference>
<dbReference type="GeneID" id="168975"/>
<dbReference type="KEGG" id="hsa:168975"/>
<dbReference type="MANE-Select" id="ENST00000518476.6">
    <property type="protein sequence ID" value="ENSP00000430073.1"/>
    <property type="RefSeq nucleotide sequence ID" value="NM_173538.3"/>
    <property type="RefSeq protein sequence ID" value="NP_775809.1"/>
</dbReference>
<dbReference type="UCSC" id="uc003ydy.3">
    <property type="organism name" value="human"/>
</dbReference>
<dbReference type="AGR" id="HGNC:26663"/>
<dbReference type="CTD" id="168975"/>
<dbReference type="DisGeNET" id="168975"/>
<dbReference type="GeneCards" id="CNBD1"/>
<dbReference type="HGNC" id="HGNC:26663">
    <property type="gene designation" value="CNBD1"/>
</dbReference>
<dbReference type="HPA" id="ENSG00000176571">
    <property type="expression patterns" value="Tissue enriched (testis)"/>
</dbReference>
<dbReference type="neXtProt" id="NX_Q8NA66"/>
<dbReference type="OpenTargets" id="ENSG00000176571"/>
<dbReference type="PharmGKB" id="PA142672090"/>
<dbReference type="VEuPathDB" id="HostDB:ENSG00000176571"/>
<dbReference type="eggNOG" id="ENOG502QVKZ">
    <property type="taxonomic scope" value="Eukaryota"/>
</dbReference>
<dbReference type="GeneTree" id="ENSGT00390000001688"/>
<dbReference type="HOGENOM" id="CLU_039975_0_0_1"/>
<dbReference type="InParanoid" id="Q8NA66"/>
<dbReference type="OMA" id="HGGHILY"/>
<dbReference type="OrthoDB" id="5966510at2759"/>
<dbReference type="PAN-GO" id="Q8NA66">
    <property type="GO annotations" value="0 GO annotations based on evolutionary models"/>
</dbReference>
<dbReference type="PhylomeDB" id="Q8NA66"/>
<dbReference type="TreeFam" id="TF337630"/>
<dbReference type="PathwayCommons" id="Q8NA66"/>
<dbReference type="SignaLink" id="Q8NA66"/>
<dbReference type="BioGRID-ORCS" id="168975">
    <property type="hits" value="13 hits in 1132 CRISPR screens"/>
</dbReference>
<dbReference type="ChiTaRS" id="CNBD1">
    <property type="organism name" value="human"/>
</dbReference>
<dbReference type="GenomeRNAi" id="168975"/>
<dbReference type="Pharos" id="Q8NA66">
    <property type="development level" value="Tdark"/>
</dbReference>
<dbReference type="PRO" id="PR:Q8NA66"/>
<dbReference type="Proteomes" id="UP000005640">
    <property type="component" value="Chromosome 8"/>
</dbReference>
<dbReference type="RNAct" id="Q8NA66">
    <property type="molecule type" value="protein"/>
</dbReference>
<dbReference type="Bgee" id="ENSG00000176571">
    <property type="expression patterns" value="Expressed in oocyte and 87 other cell types or tissues"/>
</dbReference>
<dbReference type="ExpressionAtlas" id="Q8NA66">
    <property type="expression patterns" value="baseline and differential"/>
</dbReference>
<dbReference type="CDD" id="cd00038">
    <property type="entry name" value="CAP_ED"/>
    <property type="match status" value="1"/>
</dbReference>
<dbReference type="Gene3D" id="2.60.120.10">
    <property type="entry name" value="Jelly Rolls"/>
    <property type="match status" value="2"/>
</dbReference>
<dbReference type="InterPro" id="IPR000595">
    <property type="entry name" value="cNMP-bd_dom"/>
</dbReference>
<dbReference type="InterPro" id="IPR018490">
    <property type="entry name" value="cNMP-bd_dom_sf"/>
</dbReference>
<dbReference type="InterPro" id="IPR014710">
    <property type="entry name" value="RmlC-like_jellyroll"/>
</dbReference>
<dbReference type="PANTHER" id="PTHR23011">
    <property type="entry name" value="CYCLIC NUCLEOTIDE-BINDING DOMAIN CONTAINING PROTEIN"/>
    <property type="match status" value="1"/>
</dbReference>
<dbReference type="PANTHER" id="PTHR23011:SF32">
    <property type="entry name" value="CYCLIC NUCLEOTIDE-BINDING DOMAIN-CONTAINING PROTEIN 1"/>
    <property type="match status" value="1"/>
</dbReference>
<dbReference type="Pfam" id="PF00027">
    <property type="entry name" value="cNMP_binding"/>
    <property type="match status" value="1"/>
</dbReference>
<dbReference type="SUPFAM" id="SSF51206">
    <property type="entry name" value="cAMP-binding domain-like"/>
    <property type="match status" value="2"/>
</dbReference>
<dbReference type="PROSITE" id="PS50042">
    <property type="entry name" value="CNMP_BINDING_3"/>
    <property type="match status" value="1"/>
</dbReference>
<organism>
    <name type="scientific">Homo sapiens</name>
    <name type="common">Human</name>
    <dbReference type="NCBI Taxonomy" id="9606"/>
    <lineage>
        <taxon>Eukaryota</taxon>
        <taxon>Metazoa</taxon>
        <taxon>Chordata</taxon>
        <taxon>Craniata</taxon>
        <taxon>Vertebrata</taxon>
        <taxon>Euteleostomi</taxon>
        <taxon>Mammalia</taxon>
        <taxon>Eutheria</taxon>
        <taxon>Euarchontoglires</taxon>
        <taxon>Primates</taxon>
        <taxon>Haplorrhini</taxon>
        <taxon>Catarrhini</taxon>
        <taxon>Hominidae</taxon>
        <taxon>Homo</taxon>
    </lineage>
</organism>
<reference key="1">
    <citation type="journal article" date="2004" name="Nat. Genet.">
        <title>Complete sequencing and characterization of 21,243 full-length human cDNAs.</title>
        <authorList>
            <person name="Ota T."/>
            <person name="Suzuki Y."/>
            <person name="Nishikawa T."/>
            <person name="Otsuki T."/>
            <person name="Sugiyama T."/>
            <person name="Irie R."/>
            <person name="Wakamatsu A."/>
            <person name="Hayashi K."/>
            <person name="Sato H."/>
            <person name="Nagai K."/>
            <person name="Kimura K."/>
            <person name="Makita H."/>
            <person name="Sekine M."/>
            <person name="Obayashi M."/>
            <person name="Nishi T."/>
            <person name="Shibahara T."/>
            <person name="Tanaka T."/>
            <person name="Ishii S."/>
            <person name="Yamamoto J."/>
            <person name="Saito K."/>
            <person name="Kawai Y."/>
            <person name="Isono Y."/>
            <person name="Nakamura Y."/>
            <person name="Nagahari K."/>
            <person name="Murakami K."/>
            <person name="Yasuda T."/>
            <person name="Iwayanagi T."/>
            <person name="Wagatsuma M."/>
            <person name="Shiratori A."/>
            <person name="Sudo H."/>
            <person name="Hosoiri T."/>
            <person name="Kaku Y."/>
            <person name="Kodaira H."/>
            <person name="Kondo H."/>
            <person name="Sugawara M."/>
            <person name="Takahashi M."/>
            <person name="Kanda K."/>
            <person name="Yokoi T."/>
            <person name="Furuya T."/>
            <person name="Kikkawa E."/>
            <person name="Omura Y."/>
            <person name="Abe K."/>
            <person name="Kamihara K."/>
            <person name="Katsuta N."/>
            <person name="Sato K."/>
            <person name="Tanikawa M."/>
            <person name="Yamazaki M."/>
            <person name="Ninomiya K."/>
            <person name="Ishibashi T."/>
            <person name="Yamashita H."/>
            <person name="Murakawa K."/>
            <person name="Fujimori K."/>
            <person name="Tanai H."/>
            <person name="Kimata M."/>
            <person name="Watanabe M."/>
            <person name="Hiraoka S."/>
            <person name="Chiba Y."/>
            <person name="Ishida S."/>
            <person name="Ono Y."/>
            <person name="Takiguchi S."/>
            <person name="Watanabe S."/>
            <person name="Yosida M."/>
            <person name="Hotuta T."/>
            <person name="Kusano J."/>
            <person name="Kanehori K."/>
            <person name="Takahashi-Fujii A."/>
            <person name="Hara H."/>
            <person name="Tanase T.-O."/>
            <person name="Nomura Y."/>
            <person name="Togiya S."/>
            <person name="Komai F."/>
            <person name="Hara R."/>
            <person name="Takeuchi K."/>
            <person name="Arita M."/>
            <person name="Imose N."/>
            <person name="Musashino K."/>
            <person name="Yuuki H."/>
            <person name="Oshima A."/>
            <person name="Sasaki N."/>
            <person name="Aotsuka S."/>
            <person name="Yoshikawa Y."/>
            <person name="Matsunawa H."/>
            <person name="Ichihara T."/>
            <person name="Shiohata N."/>
            <person name="Sano S."/>
            <person name="Moriya S."/>
            <person name="Momiyama H."/>
            <person name="Satoh N."/>
            <person name="Takami S."/>
            <person name="Terashima Y."/>
            <person name="Suzuki O."/>
            <person name="Nakagawa S."/>
            <person name="Senoh A."/>
            <person name="Mizoguchi H."/>
            <person name="Goto Y."/>
            <person name="Shimizu F."/>
            <person name="Wakebe H."/>
            <person name="Hishigaki H."/>
            <person name="Watanabe T."/>
            <person name="Sugiyama A."/>
            <person name="Takemoto M."/>
            <person name="Kawakami B."/>
            <person name="Yamazaki M."/>
            <person name="Watanabe K."/>
            <person name="Kumagai A."/>
            <person name="Itakura S."/>
            <person name="Fukuzumi Y."/>
            <person name="Fujimori Y."/>
            <person name="Komiyama M."/>
            <person name="Tashiro H."/>
            <person name="Tanigami A."/>
            <person name="Fujiwara T."/>
            <person name="Ono T."/>
            <person name="Yamada K."/>
            <person name="Fujii Y."/>
            <person name="Ozaki K."/>
            <person name="Hirao M."/>
            <person name="Ohmori Y."/>
            <person name="Kawabata A."/>
            <person name="Hikiji T."/>
            <person name="Kobatake N."/>
            <person name="Inagaki H."/>
            <person name="Ikema Y."/>
            <person name="Okamoto S."/>
            <person name="Okitani R."/>
            <person name="Kawakami T."/>
            <person name="Noguchi S."/>
            <person name="Itoh T."/>
            <person name="Shigeta K."/>
            <person name="Senba T."/>
            <person name="Matsumura K."/>
            <person name="Nakajima Y."/>
            <person name="Mizuno T."/>
            <person name="Morinaga M."/>
            <person name="Sasaki M."/>
            <person name="Togashi T."/>
            <person name="Oyama M."/>
            <person name="Hata H."/>
            <person name="Watanabe M."/>
            <person name="Komatsu T."/>
            <person name="Mizushima-Sugano J."/>
            <person name="Satoh T."/>
            <person name="Shirai Y."/>
            <person name="Takahashi Y."/>
            <person name="Nakagawa K."/>
            <person name="Okumura K."/>
            <person name="Nagase T."/>
            <person name="Nomura N."/>
            <person name="Kikuchi H."/>
            <person name="Masuho Y."/>
            <person name="Yamashita R."/>
            <person name="Nakai K."/>
            <person name="Yada T."/>
            <person name="Nakamura Y."/>
            <person name="Ohara O."/>
            <person name="Isogai T."/>
            <person name="Sugano S."/>
        </authorList>
    </citation>
    <scope>NUCLEOTIDE SEQUENCE [LARGE SCALE MRNA]</scope>
    <source>
        <tissue>Testis</tissue>
    </source>
</reference>
<reference key="2">
    <citation type="journal article" date="2004" name="Genome Res.">
        <title>The status, quality, and expansion of the NIH full-length cDNA project: the Mammalian Gene Collection (MGC).</title>
        <authorList>
            <consortium name="The MGC Project Team"/>
        </authorList>
    </citation>
    <scope>NUCLEOTIDE SEQUENCE [LARGE SCALE MRNA]</scope>
</reference>
<accession>Q8NA66</accession>
<sequence length="436" mass="50224">MPMSSLPAAILSHMTAINNVPPPPLHSIPNLKKSKHINYGQLNALCHIRGQHSRSMSNILSAHDTFMKQYPKVFLHQKPRLPKLFKQEEQRELNEGKEESQHQQPDDSNNIAVHVQRAHGGHILYRPKRATEKFEEFLAILKKLPIHRTPYEHKTVWKFLKTIPDLTFQLNDKHLKTLSKTVFSETWLKGSTVVANDGFYVILKGLARPQTNVYKNLIEGSDSPDSFISQSFHSFIWSEEFKNSTLAEMYLPSYDSMLSKWSTFGTLEVMPQNESETQMFSVVTEDDCEILKIPAKGYAKIKEEKIKLENMQKLKLIRMCPYYEEWPTLSIYELIALLKWKKFPPGHVIVESGNIISFVGYINSGCCNIYRSIIGFVKLRSNKVKRSQKLVYMGKLKEKESFGEISVLLQVPFTCTIITKKEVEMAIIEDKDLFVA</sequence>
<keyword id="KW-1267">Proteomics identification</keyword>
<keyword id="KW-1185">Reference proteome</keyword>
<protein>
    <recommendedName>
        <fullName>Cyclic nucleotide-binding domain-containing protein 1</fullName>
    </recommendedName>
</protein>
<name>CNBD1_HUMAN</name>
<evidence type="ECO:0000256" key="1">
    <source>
        <dbReference type="SAM" id="MobiDB-lite"/>
    </source>
</evidence>